<organism>
    <name type="scientific">Homo sapiens</name>
    <name type="common">Human</name>
    <dbReference type="NCBI Taxonomy" id="9606"/>
    <lineage>
        <taxon>Eukaryota</taxon>
        <taxon>Metazoa</taxon>
        <taxon>Chordata</taxon>
        <taxon>Craniata</taxon>
        <taxon>Vertebrata</taxon>
        <taxon>Euteleostomi</taxon>
        <taxon>Mammalia</taxon>
        <taxon>Eutheria</taxon>
        <taxon>Euarchontoglires</taxon>
        <taxon>Primates</taxon>
        <taxon>Haplorrhini</taxon>
        <taxon>Catarrhini</taxon>
        <taxon>Hominidae</taxon>
        <taxon>Homo</taxon>
    </lineage>
</organism>
<gene>
    <name evidence="30" type="primary">ACP3</name>
    <name type="synonym">ACPP</name>
</gene>
<feature type="signal peptide" evidence="5">
    <location>
        <begin position="1"/>
        <end position="32"/>
    </location>
</feature>
<feature type="chain" id="PRO_0000023963" description="Prostatic acid phosphatase">
    <location>
        <begin position="33"/>
        <end position="386"/>
    </location>
</feature>
<feature type="peptide" id="PRO_0000411250" description="PAPf39" evidence="11">
    <location>
        <begin position="248"/>
        <end position="286"/>
    </location>
</feature>
<feature type="active site" description="Nucleophile" evidence="15">
    <location>
        <position position="44"/>
    </location>
</feature>
<feature type="active site" description="Proton donor" evidence="28">
    <location>
        <position position="290"/>
    </location>
</feature>
<feature type="binding site" evidence="19">
    <location>
        <position position="43"/>
    </location>
    <ligand>
        <name>substrate</name>
    </ligand>
</feature>
<feature type="binding site" evidence="19">
    <location>
        <position position="47"/>
    </location>
    <ligand>
        <name>substrate</name>
    </ligand>
</feature>
<feature type="binding site" evidence="19">
    <location>
        <position position="111"/>
    </location>
    <ligand>
        <name>substrate</name>
    </ligand>
</feature>
<feature type="binding site" evidence="19">
    <location>
        <position position="289"/>
    </location>
    <ligand>
        <name>substrate</name>
    </ligand>
</feature>
<feature type="site" description="Important for substrate specificity">
    <location>
        <position position="49"/>
    </location>
</feature>
<feature type="site" description="Required for homodimerization" evidence="1">
    <location>
        <position position="138"/>
    </location>
</feature>
<feature type="site" description="Required for homodimerization" evidence="1">
    <location>
        <position position="144"/>
    </location>
</feature>
<feature type="site" description="Required for structural stability" evidence="18">
    <location>
        <position position="206"/>
    </location>
</feature>
<feature type="glycosylation site" description="N-linked (GlcNAc...) asparagine" evidence="5">
    <location>
        <position position="94"/>
    </location>
</feature>
<feature type="glycosylation site" description="N-linked (GlcNAc...) asparagine" evidence="5 6">
    <location>
        <position position="220"/>
    </location>
</feature>
<feature type="glycosylation site" description="N-linked (GlcNAc...) asparagine" evidence="6">
    <location>
        <position position="333"/>
    </location>
</feature>
<feature type="disulfide bond" evidence="6 15">
    <location>
        <begin position="161"/>
        <end position="372"/>
    </location>
</feature>
<feature type="disulfide bond" evidence="15">
    <location>
        <begin position="215"/>
        <end position="313"/>
    </location>
</feature>
<feature type="disulfide bond" evidence="6 15">
    <location>
        <begin position="347"/>
        <end position="351"/>
    </location>
</feature>
<feature type="splice variant" id="VSP_053360" description="In isoform 3." evidence="20 24">
    <location>
        <begin position="153"/>
        <end position="185"/>
    </location>
</feature>
<feature type="splice variant" id="VSP_036023" description="In isoform 2." evidence="21">
    <original>GTEDSTD</original>
    <variation>VLKVIFAVAFCLISAVLMVLLFIHIRRGLCWQRESYGNI</variation>
    <location>
        <begin position="380"/>
        <end position="386"/>
    </location>
</feature>
<feature type="sequence variant" id="VAR_047960" description="In dbSNP:rs17850347." evidence="8">
    <original>S</original>
    <variation>N</variation>
    <location>
        <position position="15"/>
    </location>
</feature>
<feature type="sequence variant" id="VAR_047961" description="In dbSNP:rs17856254." evidence="8">
    <original>F</original>
    <variation>V</variation>
    <location>
        <position position="124"/>
    </location>
</feature>
<feature type="sequence variant" id="VAR_047962" description="In dbSNP:rs17856253." evidence="8">
    <original>W</original>
    <variation>R</variation>
    <location>
        <position position="226"/>
    </location>
</feature>
<feature type="sequence variant" id="VAR_047963" description="In dbSNP:rs17851392." evidence="8">
    <original>Y</original>
    <variation>H</variation>
    <location>
        <position position="330"/>
    </location>
</feature>
<feature type="sequence variant" id="VAR_047964" description="In dbSNP:rs17850198." evidence="8">
    <original>V</original>
    <variation>A</variation>
    <location>
        <position position="360"/>
    </location>
</feature>
<feature type="mutagenesis site" description="Greatly reduced enzyme activity, marked decrease in structural stability, and increased binding of the inhibitor, L(+)-tartrate." evidence="18">
    <original>W</original>
    <variation>F</variation>
    <location>
        <position position="206"/>
    </location>
</feature>
<feature type="mutagenesis site" description="Reduced enzyme activity, marked decrease in structural stability, and increased binding of the inhibitor, L(+)-tartrate." evidence="18">
    <original>W</original>
    <variation>L</variation>
    <location>
        <position position="206"/>
    </location>
</feature>
<feature type="sequence conflict" description="In Ref. 5; CAA37673." evidence="25" ref="5">
    <original>SLGFLFLLFF</original>
    <variation>AFASCFCFFC</variation>
    <location>
        <begin position="15"/>
        <end position="24"/>
    </location>
</feature>
<feature type="sequence conflict" description="In Ref. 3; AAA60022 and 4; CAA36422." evidence="25" ref="3 4">
    <original>SLGFLFLLFF</original>
    <variation>ALASCFCFFC</variation>
    <location>
        <begin position="15"/>
        <end position="24"/>
    </location>
</feature>
<feature type="sequence conflict" description="In Ref. 5; CAA37673." evidence="25" ref="5">
    <original>D</original>
    <variation>H</variation>
    <location>
        <position position="46"/>
    </location>
</feature>
<feature type="sequence conflict" description="In Ref. 5; CAA37673." evidence="25" ref="5">
    <original>GFGQLTQL</original>
    <variation>RIWPTHPA</variation>
    <location>
        <begin position="66"/>
        <end position="73"/>
    </location>
</feature>
<feature type="sequence conflict" description="In Ref. 4; CAA36422." evidence="25" ref="4">
    <original>GFGQLTQL</original>
    <variation>WIWPTHPA</variation>
    <location>
        <begin position="66"/>
        <end position="73"/>
    </location>
</feature>
<feature type="sequence conflict" description="In Ref. 3; AAA60022." evidence="25" ref="3">
    <original>E</original>
    <variation>D</variation>
    <location>
        <position position="95"/>
    </location>
</feature>
<feature type="sequence conflict" description="In Ref. 3; AAA60022." evidence="25" ref="3">
    <original>A</original>
    <variation>R</variation>
    <location>
        <position position="116"/>
    </location>
</feature>
<feature type="sequence conflict" description="In Ref. 5; CAA37673." evidence="25" ref="5">
    <original>Q</original>
    <variation>E</variation>
    <location>
        <position position="139"/>
    </location>
</feature>
<feature type="sequence conflict" description="In Ref. 5; CAA37673." evidence="25" ref="5">
    <original>P</original>
    <variation>R</variation>
    <location>
        <position position="157"/>
    </location>
</feature>
<feature type="sequence conflict" description="In Ref. 4; CAA36422." evidence="25" ref="4">
    <original>P</original>
    <variation>A</variation>
    <location>
        <position position="212"/>
    </location>
</feature>
<feature type="sequence conflict" description="In Ref. 3; AAA60022." evidence="25" ref="3">
    <original>C</original>
    <variation>S</variation>
    <location>
        <position position="215"/>
    </location>
</feature>
<feature type="sequence conflict" description="In Ref. 3; AAA60022." evidence="25" ref="3">
    <original>S</original>
    <variation>T</variation>
    <location>
        <position position="294"/>
    </location>
</feature>
<feature type="sequence conflict" description="In Ref. 3; AAA60022." evidence="25" ref="3">
    <original>C</original>
    <variation>V</variation>
    <location>
        <position position="372"/>
    </location>
</feature>
<feature type="sequence conflict" description="In Ref. 5; CAA37673." evidence="25" ref="5">
    <original>D</original>
    <variation>N</variation>
    <location>
        <position position="383"/>
    </location>
</feature>
<feature type="strand" evidence="34">
    <location>
        <begin position="34"/>
        <end position="43"/>
    </location>
</feature>
<feature type="helix" evidence="34">
    <location>
        <begin position="60"/>
        <end position="62"/>
    </location>
</feature>
<feature type="strand" evidence="35">
    <location>
        <begin position="63"/>
        <end position="65"/>
    </location>
</feature>
<feature type="helix" evidence="34">
    <location>
        <begin position="72"/>
        <end position="88"/>
    </location>
</feature>
<feature type="turn" evidence="34">
    <location>
        <begin position="89"/>
        <end position="93"/>
    </location>
</feature>
<feature type="turn" evidence="34">
    <location>
        <begin position="99"/>
        <end position="101"/>
    </location>
</feature>
<feature type="strand" evidence="34">
    <location>
        <begin position="102"/>
        <end position="106"/>
    </location>
</feature>
<feature type="helix" evidence="34">
    <location>
        <begin position="110"/>
        <end position="123"/>
    </location>
</feature>
<feature type="helix" evidence="34">
    <location>
        <begin position="128"/>
        <end position="130"/>
    </location>
</feature>
<feature type="strand" evidence="33">
    <location>
        <begin position="134"/>
        <end position="136"/>
    </location>
</feature>
<feature type="strand" evidence="33">
    <location>
        <begin position="144"/>
        <end position="146"/>
    </location>
</feature>
<feature type="helix" evidence="34">
    <location>
        <begin position="148"/>
        <end position="150"/>
    </location>
</feature>
<feature type="strand" evidence="34">
    <location>
        <begin position="152"/>
        <end position="155"/>
    </location>
</feature>
<feature type="helix" evidence="34">
    <location>
        <begin position="162"/>
        <end position="173"/>
    </location>
</feature>
<feature type="helix" evidence="34">
    <location>
        <begin position="175"/>
        <end position="195"/>
    </location>
</feature>
<feature type="helix" evidence="34">
    <location>
        <begin position="202"/>
        <end position="208"/>
    </location>
</feature>
<feature type="helix" evidence="34">
    <location>
        <begin position="210"/>
        <end position="218"/>
    </location>
</feature>
<feature type="helix" evidence="34">
    <location>
        <begin position="229"/>
        <end position="247"/>
    </location>
</feature>
<feature type="strand" evidence="34">
    <location>
        <begin position="248"/>
        <end position="251"/>
    </location>
</feature>
<feature type="helix" evidence="34">
    <location>
        <begin position="252"/>
        <end position="258"/>
    </location>
</feature>
<feature type="helix" evidence="34">
    <location>
        <begin position="261"/>
        <end position="276"/>
    </location>
</feature>
<feature type="strand" evidence="34">
    <location>
        <begin position="277"/>
        <end position="279"/>
    </location>
</feature>
<feature type="strand" evidence="34">
    <location>
        <begin position="283"/>
        <end position="288"/>
    </location>
</feature>
<feature type="helix" evidence="34">
    <location>
        <begin position="290"/>
        <end position="300"/>
    </location>
</feature>
<feature type="strand" evidence="34">
    <location>
        <begin position="313"/>
        <end position="323"/>
    </location>
</feature>
<feature type="strand" evidence="34">
    <location>
        <begin position="325"/>
        <end position="332"/>
    </location>
</feature>
<feature type="strand" evidence="35">
    <location>
        <begin position="335"/>
        <end position="337"/>
    </location>
</feature>
<feature type="strand" evidence="34">
    <location>
        <begin position="340"/>
        <end position="342"/>
    </location>
</feature>
<feature type="strand" evidence="34">
    <location>
        <begin position="349"/>
        <end position="352"/>
    </location>
</feature>
<feature type="helix" evidence="34">
    <location>
        <begin position="353"/>
        <end position="360"/>
    </location>
</feature>
<feature type="helix" evidence="34">
    <location>
        <begin position="361"/>
        <end position="363"/>
    </location>
</feature>
<feature type="helix" evidence="34">
    <location>
        <begin position="368"/>
        <end position="372"/>
    </location>
</feature>
<protein>
    <recommendedName>
        <fullName evidence="25">Prostatic acid phosphatase</fullName>
        <shortName>PAP</shortName>
        <ecNumber evidence="4 7 18">3.1.3.2</ecNumber>
    </recommendedName>
    <alternativeName>
        <fullName>5'-nucleotidase</fullName>
        <shortName>5'-NT</shortName>
        <ecNumber evidence="2">3.1.3.5</ecNumber>
    </alternativeName>
    <alternativeName>
        <fullName evidence="30">Acid phosphatase 3</fullName>
    </alternativeName>
    <alternativeName>
        <fullName>Ecto-5'-nucleotidase</fullName>
    </alternativeName>
    <alternativeName>
        <fullName evidence="29">Protein tyrosine phosphatase ACP3</fullName>
        <ecNumber evidence="16">3.1.3.48</ecNumber>
    </alternativeName>
    <alternativeName>
        <fullName>Thiamine monophosphatase</fullName>
        <shortName>TMPase</shortName>
    </alternativeName>
    <component>
        <recommendedName>
            <fullName>PAPf39</fullName>
        </recommendedName>
    </component>
</protein>
<accession>P15309</accession>
<accession>D3DNC6</accession>
<accession>Q5FBY0</accession>
<accession>Q96KY0</accession>
<accession>Q96QK9</accession>
<accession>Q96QM0</accession>
<evidence type="ECO:0000250" key="1">
    <source>
        <dbReference type="UniProtKB" id="P20646"/>
    </source>
</evidence>
<evidence type="ECO:0000250" key="2">
    <source>
        <dbReference type="UniProtKB" id="Q8CE08"/>
    </source>
</evidence>
<evidence type="ECO:0000255" key="3"/>
<evidence type="ECO:0000269" key="4">
    <source>
    </source>
</evidence>
<evidence type="ECO:0000269" key="5">
    <source>
    </source>
</evidence>
<evidence type="ECO:0000269" key="6">
    <source>
    </source>
</evidence>
<evidence type="ECO:0000269" key="7">
    <source>
    </source>
</evidence>
<evidence type="ECO:0000269" key="8">
    <source>
    </source>
</evidence>
<evidence type="ECO:0000269" key="9">
    <source>
    </source>
</evidence>
<evidence type="ECO:0000269" key="10">
    <source>
    </source>
</evidence>
<evidence type="ECO:0000269" key="11">
    <source>
    </source>
</evidence>
<evidence type="ECO:0000269" key="12">
    <source>
    </source>
</evidence>
<evidence type="ECO:0000269" key="13">
    <source>
    </source>
</evidence>
<evidence type="ECO:0000269" key="14">
    <source>
    </source>
</evidence>
<evidence type="ECO:0000269" key="15">
    <source>
    </source>
</evidence>
<evidence type="ECO:0000269" key="16">
    <source>
    </source>
</evidence>
<evidence type="ECO:0000269" key="17">
    <source>
    </source>
</evidence>
<evidence type="ECO:0000269" key="18">
    <source>
    </source>
</evidence>
<evidence type="ECO:0000269" key="19">
    <source>
    </source>
</evidence>
<evidence type="ECO:0000303" key="20">
    <source>
    </source>
</evidence>
<evidence type="ECO:0000303" key="21">
    <source>
    </source>
</evidence>
<evidence type="ECO:0000303" key="22">
    <source>
    </source>
</evidence>
<evidence type="ECO:0000303" key="23">
    <source>
    </source>
</evidence>
<evidence type="ECO:0000303" key="24">
    <source ref="7"/>
</evidence>
<evidence type="ECO:0000305" key="25"/>
<evidence type="ECO:0000305" key="26">
    <source>
    </source>
</evidence>
<evidence type="ECO:0000305" key="27">
    <source>
    </source>
</evidence>
<evidence type="ECO:0000305" key="28">
    <source>
    </source>
</evidence>
<evidence type="ECO:0000305" key="29">
    <source>
    </source>
</evidence>
<evidence type="ECO:0000312" key="30">
    <source>
        <dbReference type="HGNC" id="HGNC:125"/>
    </source>
</evidence>
<evidence type="ECO:0007744" key="31">
    <source>
        <dbReference type="PDB" id="1ND5"/>
    </source>
</evidence>
<evidence type="ECO:0007744" key="32">
    <source>
        <dbReference type="PDB" id="1ND6"/>
    </source>
</evidence>
<evidence type="ECO:0007829" key="33">
    <source>
        <dbReference type="PDB" id="1CVI"/>
    </source>
</evidence>
<evidence type="ECO:0007829" key="34">
    <source>
        <dbReference type="PDB" id="1ND5"/>
    </source>
</evidence>
<evidence type="ECO:0007829" key="35">
    <source>
        <dbReference type="PDB" id="8XJ4"/>
    </source>
</evidence>
<comment type="function">
    <text evidence="4 7 16 18">A non-specific tyrosine phosphatase that dephosphorylates a diverse number of substrates under acidic conditions (pH 4-6) including alkyl, aryl, and acyl orthophosphate monoesters and phosphorylated proteins (PubMed:10506173, PubMed:15280042, PubMed:20498373, PubMed:9584846). Has lipid phosphatase activity and inactivates lysophosphatidic acid in seminal plasma (PubMed:10506173, PubMed:15280042).</text>
</comment>
<comment type="function">
    <molecule>Isoform 2</molecule>
    <text evidence="2 16">Tyrosine phosphatase that acts as a tumor suppressor of prostate cancer through dephosphorylation of ERBB2 and deactivation of MAPK-mediated signaling (PubMed:20498373). In addition to its tyrosine phosphatase activity has ecto-5'-nucleotidase activity in dorsal root ganglion (DRG) neurons. Generates adenosine from AMP which acts as a pain suppressor (By similarity).</text>
</comment>
<comment type="function">
    <molecule>PAPf39</molecule>
    <text evidence="11 12 13 14">(Microbial infection) Forms amyloid beta-sheet fibrils in semen. These fibrils, termed SEVI (semen-derived enhancer of viral infection) capture HIV virions, attach them to target cells and enhance infection (PubMed:18083097, PubMed:19451623, PubMed:19897482). SEVI amyloid fibrils are degraded by polyphenol epigallocatechin-3-gallate (EGCG), a constituent of green tea (PubMed:19451623). Target cell attachment and enhancement of HIV infection is inhibited by surfen (PubMed:19897482). Also similarly boosts XMRV (xenotropic murine leukemia virus-related virus) infection (PubMed:19403677).</text>
</comment>
<comment type="catalytic activity">
    <reaction evidence="4 7 18">
        <text>a phosphate monoester + H2O = an alcohol + phosphate</text>
        <dbReference type="Rhea" id="RHEA:15017"/>
        <dbReference type="ChEBI" id="CHEBI:15377"/>
        <dbReference type="ChEBI" id="CHEBI:30879"/>
        <dbReference type="ChEBI" id="CHEBI:43474"/>
        <dbReference type="ChEBI" id="CHEBI:67140"/>
        <dbReference type="EC" id="3.1.3.2"/>
    </reaction>
</comment>
<comment type="catalytic activity">
    <reaction evidence="4">
        <text>1-(9Z-octadecenoyl)-sn-glycero-3-phosphate + H2O = 1-(9Z-octadecenoyl)-sn-glycerol + phosphate</text>
        <dbReference type="Rhea" id="RHEA:39835"/>
        <dbReference type="ChEBI" id="CHEBI:15377"/>
        <dbReference type="ChEBI" id="CHEBI:43474"/>
        <dbReference type="ChEBI" id="CHEBI:74544"/>
        <dbReference type="ChEBI" id="CHEBI:75757"/>
    </reaction>
    <physiologicalReaction direction="left-to-right" evidence="26">
        <dbReference type="Rhea" id="RHEA:39836"/>
    </physiologicalReaction>
</comment>
<comment type="catalytic activity">
    <reaction evidence="2">
        <text>a ribonucleoside 5'-phosphate + H2O = a ribonucleoside + phosphate</text>
        <dbReference type="Rhea" id="RHEA:12484"/>
        <dbReference type="ChEBI" id="CHEBI:15377"/>
        <dbReference type="ChEBI" id="CHEBI:18254"/>
        <dbReference type="ChEBI" id="CHEBI:43474"/>
        <dbReference type="ChEBI" id="CHEBI:58043"/>
        <dbReference type="EC" id="3.1.3.5"/>
    </reaction>
</comment>
<comment type="catalytic activity">
    <reaction evidence="16">
        <text>O-phospho-L-tyrosyl-[protein] + H2O = L-tyrosyl-[protein] + phosphate</text>
        <dbReference type="Rhea" id="RHEA:10684"/>
        <dbReference type="Rhea" id="RHEA-COMP:10136"/>
        <dbReference type="Rhea" id="RHEA-COMP:20101"/>
        <dbReference type="ChEBI" id="CHEBI:15377"/>
        <dbReference type="ChEBI" id="CHEBI:43474"/>
        <dbReference type="ChEBI" id="CHEBI:46858"/>
        <dbReference type="ChEBI" id="CHEBI:61978"/>
        <dbReference type="EC" id="3.1.3.48"/>
    </reaction>
</comment>
<comment type="activity regulation">
    <text evidence="18">Phosphatase activity inhibited by L(+)-tartrate, and by its derivative, alpha-benzylaminobenzylphosphonic acid.</text>
</comment>
<comment type="subunit">
    <text evidence="1">Homodimer; dimer formation is required for phosphatase activity.</text>
</comment>
<comment type="interaction">
    <interactant intactId="EBI-1222012">
        <id>P15309</id>
    </interactant>
    <interactant intactId="EBI-1222012">
        <id>P15309</id>
        <label>ACP3</label>
    </interactant>
    <organismsDiffer>false</organismsDiffer>
    <experiments>4</experiments>
</comment>
<comment type="interaction">
    <interactant intactId="EBI-1222012">
        <id>P15309</id>
    </interactant>
    <interactant intactId="EBI-641062">
        <id>P04626</id>
        <label>ERBB2</label>
    </interactant>
    <organismsDiffer>false</organismsDiffer>
    <experiments>2</experiments>
</comment>
<comment type="subcellular location">
    <molecule>Isoform 1</molecule>
    <subcellularLocation>
        <location evidence="27">Secreted</location>
    </subcellularLocation>
</comment>
<comment type="subcellular location">
    <molecule>Isoform 2</molecule>
    <subcellularLocation>
        <location evidence="9 10 16">Cell membrane</location>
        <topology evidence="3">Single-pass type I membrane protein</topology>
    </subcellularLocation>
    <subcellularLocation>
        <location evidence="9 10">Lysosome membrane</location>
        <topology evidence="3">Single-pass type I membrane protein</topology>
    </subcellularLocation>
    <subcellularLocation>
        <location evidence="16">Nucleus</location>
    </subcellularLocation>
    <subcellularLocation>
        <location evidence="16">Cytoplasm</location>
        <location evidence="16">Cytosol</location>
    </subcellularLocation>
    <text evidence="9 10">Appears to shuttle between the cell membrane and intracellular vesicles. Colocalizes with FLOT1 at cell membrane and in intracellular vesicles (PubMed:17638863). Colocalizes with LAMP2 on the lysosome membrane (PubMed:17897319).</text>
</comment>
<comment type="alternative products">
    <event type="alternative splicing"/>
    <isoform>
        <id>P15309-1</id>
        <name>1</name>
        <name>Secreted PAP</name>
        <name>sPAP</name>
        <sequence type="displayed"/>
    </isoform>
    <isoform>
        <id>P15309-2</id>
        <name>2</name>
        <name>TMPase</name>
        <name evidence="22">TM-PAP</name>
        <name>cellular PAP</name>
        <name>cPAP</name>
        <name evidence="23">cPAcP</name>
        <sequence type="described" ref="VSP_036023"/>
    </isoform>
    <isoform>
        <id>P15309-3</id>
        <name>3</name>
        <sequence type="described" ref="VSP_053360"/>
    </isoform>
</comment>
<comment type="tissue specificity">
    <text evidence="9 17">Highly expressed in the prostate, restricted to glandular and ductal epithelial cells. Also expressed in bladder, kidney, pancreas, lung, cervix, testis and ovary. Weak expression in a subset of pancreatic islet cells, squamous epithelia, the pilosebaceous unit, colonic neuroendocrine cells and skin adnexal structures. Low expression in prostate carcinoma cells and tissues.</text>
</comment>
<comment type="tissue specificity">
    <molecule>Isoform 2</molecule>
    <text evidence="9">Widely expressed. Expressed in the sarcolemma of skeletal muscle.</text>
</comment>
<comment type="PTM">
    <text evidence="5 6">N-glycosylated. High mannose content, partially sialylated and fucosylated biantennary complex. Also fucosylated with partially sialylated triantennary complex oligosaccharides.</text>
</comment>
<comment type="PTM">
    <text evidence="11">Proteolytically cleaved in seminal fluid to produce several peptides. Peptide PAPf39, the most prominent, forms amyloid beta-sheet fibrils, SEVI (semen-derived enhancer of viral infection).</text>
</comment>
<comment type="miscellaneous">
    <text>Has been used as a diagnostic tool for staging metastatic prostatic cancer.</text>
</comment>
<comment type="similarity">
    <text evidence="25">Belongs to the histidine acid phosphatase family.</text>
</comment>
<proteinExistence type="evidence at protein level"/>
<name>PPAP_HUMAN</name>
<dbReference type="EC" id="3.1.3.2" evidence="4 7 18"/>
<dbReference type="EC" id="3.1.3.5" evidence="2"/>
<dbReference type="EC" id="3.1.3.48" evidence="16"/>
<dbReference type="EMBL" id="M97589">
    <property type="protein sequence ID" value="AAA60021.1"/>
    <property type="molecule type" value="Genomic_DNA"/>
</dbReference>
<dbReference type="EMBL" id="M97580">
    <property type="protein sequence ID" value="AAA60021.1"/>
    <property type="status" value="JOINED"/>
    <property type="molecule type" value="Genomic_DNA"/>
</dbReference>
<dbReference type="EMBL" id="M97581">
    <property type="protein sequence ID" value="AAA60021.1"/>
    <property type="status" value="JOINED"/>
    <property type="molecule type" value="Genomic_DNA"/>
</dbReference>
<dbReference type="EMBL" id="M97582">
    <property type="protein sequence ID" value="AAA60021.1"/>
    <property type="status" value="JOINED"/>
    <property type="molecule type" value="Genomic_DNA"/>
</dbReference>
<dbReference type="EMBL" id="M97583">
    <property type="protein sequence ID" value="AAA60021.1"/>
    <property type="status" value="JOINED"/>
    <property type="molecule type" value="Genomic_DNA"/>
</dbReference>
<dbReference type="EMBL" id="M97584">
    <property type="protein sequence ID" value="AAA60021.1"/>
    <property type="status" value="JOINED"/>
    <property type="molecule type" value="Genomic_DNA"/>
</dbReference>
<dbReference type="EMBL" id="M97585">
    <property type="protein sequence ID" value="AAA60021.1"/>
    <property type="status" value="JOINED"/>
    <property type="molecule type" value="Genomic_DNA"/>
</dbReference>
<dbReference type="EMBL" id="M97586">
    <property type="protein sequence ID" value="AAA60021.1"/>
    <property type="status" value="JOINED"/>
    <property type="molecule type" value="Genomic_DNA"/>
</dbReference>
<dbReference type="EMBL" id="M97587">
    <property type="protein sequence ID" value="AAA60021.1"/>
    <property type="status" value="JOINED"/>
    <property type="molecule type" value="Genomic_DNA"/>
</dbReference>
<dbReference type="EMBL" id="M97588">
    <property type="protein sequence ID" value="AAA60021.1"/>
    <property type="status" value="JOINED"/>
    <property type="molecule type" value="Genomic_DNA"/>
</dbReference>
<dbReference type="EMBL" id="M34840">
    <property type="protein sequence ID" value="AAA69694.1"/>
    <property type="molecule type" value="mRNA"/>
</dbReference>
<dbReference type="EMBL" id="M24902">
    <property type="protein sequence ID" value="AAA60022.1"/>
    <property type="molecule type" value="mRNA"/>
</dbReference>
<dbReference type="EMBL" id="X52174">
    <property type="protein sequence ID" value="CAA36422.1"/>
    <property type="molecule type" value="mRNA"/>
</dbReference>
<dbReference type="EMBL" id="X53605">
    <property type="protein sequence ID" value="CAA37673.1"/>
    <property type="molecule type" value="mRNA"/>
</dbReference>
<dbReference type="EMBL" id="U07097">
    <property type="protein sequence ID" value="AAB60640.1"/>
    <property type="molecule type" value="Genomic_DNA"/>
</dbReference>
<dbReference type="EMBL" id="U07083">
    <property type="protein sequence ID" value="AAB60640.1"/>
    <property type="status" value="JOINED"/>
    <property type="molecule type" value="Genomic_DNA"/>
</dbReference>
<dbReference type="EMBL" id="U07085">
    <property type="protein sequence ID" value="AAB60640.1"/>
    <property type="status" value="JOINED"/>
    <property type="molecule type" value="Genomic_DNA"/>
</dbReference>
<dbReference type="EMBL" id="U07086">
    <property type="protein sequence ID" value="AAB60640.1"/>
    <property type="status" value="JOINED"/>
    <property type="molecule type" value="Genomic_DNA"/>
</dbReference>
<dbReference type="EMBL" id="U07088">
    <property type="protein sequence ID" value="AAB60640.1"/>
    <property type="status" value="JOINED"/>
    <property type="molecule type" value="Genomic_DNA"/>
</dbReference>
<dbReference type="EMBL" id="U07091">
    <property type="protein sequence ID" value="AAB60640.1"/>
    <property type="status" value="JOINED"/>
    <property type="molecule type" value="Genomic_DNA"/>
</dbReference>
<dbReference type="EMBL" id="U07092">
    <property type="protein sequence ID" value="AAB60640.1"/>
    <property type="status" value="JOINED"/>
    <property type="molecule type" value="Genomic_DNA"/>
</dbReference>
<dbReference type="EMBL" id="U07093">
    <property type="protein sequence ID" value="AAB60640.1"/>
    <property type="status" value="JOINED"/>
    <property type="molecule type" value="Genomic_DNA"/>
</dbReference>
<dbReference type="EMBL" id="U07095">
    <property type="protein sequence ID" value="AAB60640.1"/>
    <property type="status" value="JOINED"/>
    <property type="molecule type" value="Genomic_DNA"/>
</dbReference>
<dbReference type="EMBL" id="AB102888">
    <property type="protein sequence ID" value="BAD89417.1"/>
    <property type="molecule type" value="mRNA"/>
</dbReference>
<dbReference type="EMBL" id="AK300540">
    <property type="protein sequence ID" value="BAG62248.1"/>
    <property type="molecule type" value="mRNA"/>
</dbReference>
<dbReference type="EMBL" id="AC020633">
    <property type="status" value="NOT_ANNOTATED_CDS"/>
    <property type="molecule type" value="Genomic_DNA"/>
</dbReference>
<dbReference type="EMBL" id="CH471052">
    <property type="protein sequence ID" value="EAW79203.1"/>
    <property type="molecule type" value="Genomic_DNA"/>
</dbReference>
<dbReference type="EMBL" id="CH471052">
    <property type="protein sequence ID" value="EAW79205.1"/>
    <property type="molecule type" value="Genomic_DNA"/>
</dbReference>
<dbReference type="EMBL" id="BC007460">
    <property type="protein sequence ID" value="AAH07460.1"/>
    <property type="molecule type" value="mRNA"/>
</dbReference>
<dbReference type="EMBL" id="BC008493">
    <property type="protein sequence ID" value="AAH08493.1"/>
    <property type="molecule type" value="mRNA"/>
</dbReference>
<dbReference type="EMBL" id="BC016344">
    <property type="protein sequence ID" value="AAH16344.1"/>
    <property type="molecule type" value="mRNA"/>
</dbReference>
<dbReference type="CCDS" id="CCDS3073.1">
    <molecule id="P15309-1"/>
</dbReference>
<dbReference type="CCDS" id="CCDS46916.1">
    <molecule id="P15309-2"/>
</dbReference>
<dbReference type="CCDS" id="CCDS77818.1">
    <molecule id="P15309-3"/>
</dbReference>
<dbReference type="PIR" id="JH0610">
    <property type="entry name" value="JH0610"/>
</dbReference>
<dbReference type="RefSeq" id="NP_001090.2">
    <molecule id="P15309-1"/>
    <property type="nucleotide sequence ID" value="NM_001099.4"/>
</dbReference>
<dbReference type="RefSeq" id="NP_001127666.1">
    <molecule id="P15309-2"/>
    <property type="nucleotide sequence ID" value="NM_001134194.2"/>
</dbReference>
<dbReference type="RefSeq" id="NP_001278966.1">
    <molecule id="P15309-3"/>
    <property type="nucleotide sequence ID" value="NM_001292037.2"/>
</dbReference>
<dbReference type="PDB" id="1CVI">
    <property type="method" value="X-ray"/>
    <property type="resolution" value="3.20 A"/>
    <property type="chains" value="A/B/C/D=33-374"/>
</dbReference>
<dbReference type="PDB" id="1ND5">
    <property type="method" value="X-ray"/>
    <property type="resolution" value="2.90 A"/>
    <property type="chains" value="A/B/C/D=33-386"/>
</dbReference>
<dbReference type="PDB" id="1ND6">
    <property type="method" value="X-ray"/>
    <property type="resolution" value="2.40 A"/>
    <property type="chains" value="A/B/C/D=33-386"/>
</dbReference>
<dbReference type="PDB" id="2HPA">
    <property type="method" value="X-ray"/>
    <property type="resolution" value="2.90 A"/>
    <property type="chains" value="A/B/C/D=33-374"/>
</dbReference>
<dbReference type="PDB" id="2L3H">
    <property type="method" value="NMR"/>
    <property type="chains" value="A=248-286"/>
</dbReference>
<dbReference type="PDB" id="2L77">
    <property type="method" value="NMR"/>
    <property type="chains" value="A=248-286"/>
</dbReference>
<dbReference type="PDB" id="2L79">
    <property type="method" value="NMR"/>
    <property type="chains" value="A=248-286"/>
</dbReference>
<dbReference type="PDB" id="2MG0">
    <property type="method" value="NMR"/>
    <property type="chains" value="A=262-270"/>
</dbReference>
<dbReference type="PDB" id="3PPD">
    <property type="method" value="X-ray"/>
    <property type="resolution" value="1.50 A"/>
    <property type="chains" value="A=260-265"/>
</dbReference>
<dbReference type="PDB" id="7ZZV">
    <property type="method" value="NMR"/>
    <property type="chains" value="A=85-120"/>
</dbReference>
<dbReference type="PDB" id="8XJ4">
    <property type="method" value="EM"/>
    <property type="resolution" value="3.19 A"/>
    <property type="chains" value="A/B=31-377"/>
</dbReference>
<dbReference type="PDBsum" id="1CVI"/>
<dbReference type="PDBsum" id="1ND5"/>
<dbReference type="PDBsum" id="1ND6"/>
<dbReference type="PDBsum" id="2HPA"/>
<dbReference type="PDBsum" id="2L3H"/>
<dbReference type="PDBsum" id="2L77"/>
<dbReference type="PDBsum" id="2L79"/>
<dbReference type="PDBsum" id="2MG0"/>
<dbReference type="PDBsum" id="3PPD"/>
<dbReference type="PDBsum" id="7ZZV"/>
<dbReference type="PDBsum" id="8XJ4"/>
<dbReference type="BMRB" id="P15309"/>
<dbReference type="EMDB" id="EMD-38393"/>
<dbReference type="SMR" id="P15309"/>
<dbReference type="BioGRID" id="106571">
    <property type="interactions" value="178"/>
</dbReference>
<dbReference type="ComplexPortal" id="CPX-120">
    <property type="entry name" value="Prostatic acid phosphatase complex"/>
</dbReference>
<dbReference type="FunCoup" id="P15309">
    <property type="interactions" value="535"/>
</dbReference>
<dbReference type="IntAct" id="P15309">
    <property type="interactions" value="75"/>
</dbReference>
<dbReference type="MINT" id="P15309"/>
<dbReference type="STRING" id="9606.ENSP00000323036"/>
<dbReference type="BindingDB" id="P15309"/>
<dbReference type="ChEMBL" id="CHEMBL2633"/>
<dbReference type="DrugBank" id="DB03390">
    <property type="generic name" value="(2R,3R)-2,3-Dihydroxy-4-oxo-4-(propylamino)butanoic acid"/>
</dbReference>
<dbReference type="DrugBank" id="DB03577">
    <property type="generic name" value="Alpha-Benzyl-Aminobenzyl-Phosphonic Acid"/>
</dbReference>
<dbReference type="DrugBank" id="DB06688">
    <property type="generic name" value="Sipuleucel-T"/>
</dbReference>
<dbReference type="DrugCentral" id="P15309"/>
<dbReference type="SwissLipids" id="SLP:000001295">
    <molecule id="P15309-1"/>
</dbReference>
<dbReference type="DEPOD" id="ACPP"/>
<dbReference type="GlyConnect" id="2001">
    <property type="glycosylation" value="6 N-Linked glycans (2 sites)"/>
</dbReference>
<dbReference type="GlyCosmos" id="P15309">
    <property type="glycosylation" value="3 sites, 20 glycans"/>
</dbReference>
<dbReference type="GlyGen" id="P15309">
    <property type="glycosylation" value="3 sites, 22 N-linked glycans (2 sites)"/>
</dbReference>
<dbReference type="iPTMnet" id="P15309"/>
<dbReference type="PhosphoSitePlus" id="P15309"/>
<dbReference type="SwissPalm" id="P15309"/>
<dbReference type="BioMuta" id="ACPP"/>
<dbReference type="DMDM" id="130730"/>
<dbReference type="jPOST" id="P15309"/>
<dbReference type="MassIVE" id="P15309"/>
<dbReference type="PaxDb" id="9606-ENSP00000323036"/>
<dbReference type="PeptideAtlas" id="P15309"/>
<dbReference type="ProteomicsDB" id="53126">
    <molecule id="P15309-1"/>
</dbReference>
<dbReference type="ProteomicsDB" id="53127">
    <molecule id="P15309-2"/>
</dbReference>
<dbReference type="ProteomicsDB" id="62789"/>
<dbReference type="Pumba" id="P15309"/>
<dbReference type="Antibodypedia" id="1343">
    <property type="antibodies" value="1003 antibodies from 43 providers"/>
</dbReference>
<dbReference type="DNASU" id="55"/>
<dbReference type="Ensembl" id="ENST00000336375.10">
    <molecule id="P15309-1"/>
    <property type="protein sequence ID" value="ENSP00000337471.5"/>
    <property type="gene ID" value="ENSG00000014257.17"/>
</dbReference>
<dbReference type="Ensembl" id="ENST00000351273.12">
    <molecule id="P15309-2"/>
    <property type="protein sequence ID" value="ENSP00000323036.8"/>
    <property type="gene ID" value="ENSG00000014257.17"/>
</dbReference>
<dbReference type="Ensembl" id="ENST00000475741.5">
    <molecule id="P15309-3"/>
    <property type="protein sequence ID" value="ENSP00000417744.1"/>
    <property type="gene ID" value="ENSG00000014257.17"/>
</dbReference>
<dbReference type="GeneID" id="55"/>
<dbReference type="KEGG" id="hsa:55"/>
<dbReference type="MANE-Select" id="ENST00000336375.10">
    <property type="protein sequence ID" value="ENSP00000337471.5"/>
    <property type="RefSeq nucleotide sequence ID" value="NM_001099.5"/>
    <property type="RefSeq protein sequence ID" value="NP_001090.2"/>
</dbReference>
<dbReference type="UCSC" id="uc003eon.4">
    <molecule id="P15309-1"/>
    <property type="organism name" value="human"/>
</dbReference>
<dbReference type="AGR" id="HGNC:125"/>
<dbReference type="CTD" id="55"/>
<dbReference type="DisGeNET" id="55"/>
<dbReference type="GeneCards" id="ACP3"/>
<dbReference type="HGNC" id="HGNC:125">
    <property type="gene designation" value="ACP3"/>
</dbReference>
<dbReference type="HPA" id="ENSG00000014257">
    <property type="expression patterns" value="Tissue enriched (prostate)"/>
</dbReference>
<dbReference type="MIM" id="171790">
    <property type="type" value="gene"/>
</dbReference>
<dbReference type="neXtProt" id="NX_P15309"/>
<dbReference type="OpenTargets" id="ENSG00000014257"/>
<dbReference type="VEuPathDB" id="HostDB:ENSG00000014257"/>
<dbReference type="eggNOG" id="KOG3720">
    <property type="taxonomic scope" value="Eukaryota"/>
</dbReference>
<dbReference type="GeneTree" id="ENSGT00940000160450"/>
<dbReference type="HOGENOM" id="CLU_030431_1_1_1"/>
<dbReference type="InParanoid" id="P15309"/>
<dbReference type="OMA" id="TYDTLHC"/>
<dbReference type="OrthoDB" id="258392at2759"/>
<dbReference type="PAN-GO" id="P15309">
    <property type="GO annotations" value="5 GO annotations based on evolutionary models"/>
</dbReference>
<dbReference type="PhylomeDB" id="P15309"/>
<dbReference type="TreeFam" id="TF312893"/>
<dbReference type="BRENDA" id="3.1.3.2">
    <property type="organism ID" value="2681"/>
</dbReference>
<dbReference type="PathwayCommons" id="P15309"/>
<dbReference type="Reactome" id="R-HSA-6798695">
    <property type="pathway name" value="Neutrophil degranulation"/>
</dbReference>
<dbReference type="SABIO-RK" id="P15309"/>
<dbReference type="SignaLink" id="P15309"/>
<dbReference type="SIGNOR" id="P15309"/>
<dbReference type="BioGRID-ORCS" id="55">
    <property type="hits" value="12 hits in 1154 CRISPR screens"/>
</dbReference>
<dbReference type="ChiTaRS" id="ACPP">
    <property type="organism name" value="human"/>
</dbReference>
<dbReference type="EvolutionaryTrace" id="P15309"/>
<dbReference type="GeneWiki" id="Prostatic_acid_phosphatase"/>
<dbReference type="GenomeRNAi" id="55"/>
<dbReference type="Pharos" id="P15309">
    <property type="development level" value="Tchem"/>
</dbReference>
<dbReference type="PRO" id="PR:P15309"/>
<dbReference type="Proteomes" id="UP000005640">
    <property type="component" value="Chromosome 3"/>
</dbReference>
<dbReference type="RNAct" id="P15309">
    <property type="molecule type" value="protein"/>
</dbReference>
<dbReference type="Bgee" id="ENSG00000014257">
    <property type="expression patterns" value="Expressed in prostate gland and 133 other cell types or tissues"/>
</dbReference>
<dbReference type="ExpressionAtlas" id="P15309">
    <property type="expression patterns" value="baseline and differential"/>
</dbReference>
<dbReference type="GO" id="GO:0045177">
    <property type="term" value="C:apical part of cell"/>
    <property type="evidence" value="ECO:0007669"/>
    <property type="project" value="Ensembl"/>
</dbReference>
<dbReference type="GO" id="GO:0035577">
    <property type="term" value="C:azurophil granule membrane"/>
    <property type="evidence" value="ECO:0000304"/>
    <property type="project" value="Reactome"/>
</dbReference>
<dbReference type="GO" id="GO:0005829">
    <property type="term" value="C:cytosol"/>
    <property type="evidence" value="ECO:0007669"/>
    <property type="project" value="UniProtKB-SubCell"/>
</dbReference>
<dbReference type="GO" id="GO:0070062">
    <property type="term" value="C:extracellular exosome"/>
    <property type="evidence" value="ECO:0007005"/>
    <property type="project" value="UniProtKB"/>
</dbReference>
<dbReference type="GO" id="GO:0005615">
    <property type="term" value="C:extracellular space"/>
    <property type="evidence" value="ECO:0000314"/>
    <property type="project" value="UniProtKB"/>
</dbReference>
<dbReference type="GO" id="GO:0030175">
    <property type="term" value="C:filopodium"/>
    <property type="evidence" value="ECO:0007669"/>
    <property type="project" value="Ensembl"/>
</dbReference>
<dbReference type="GO" id="GO:0031985">
    <property type="term" value="C:Golgi cisterna"/>
    <property type="evidence" value="ECO:0007669"/>
    <property type="project" value="Ensembl"/>
</dbReference>
<dbReference type="GO" id="GO:0005765">
    <property type="term" value="C:lysosomal membrane"/>
    <property type="evidence" value="ECO:0007005"/>
    <property type="project" value="UniProtKB"/>
</dbReference>
<dbReference type="GO" id="GO:0005771">
    <property type="term" value="C:multivesicular body"/>
    <property type="evidence" value="ECO:0007669"/>
    <property type="project" value="Ensembl"/>
</dbReference>
<dbReference type="GO" id="GO:0005634">
    <property type="term" value="C:nucleus"/>
    <property type="evidence" value="ECO:0007005"/>
    <property type="project" value="UniProtKB"/>
</dbReference>
<dbReference type="GO" id="GO:0005886">
    <property type="term" value="C:plasma membrane"/>
    <property type="evidence" value="ECO:0000314"/>
    <property type="project" value="UniProtKB"/>
</dbReference>
<dbReference type="GO" id="GO:0012506">
    <property type="term" value="C:vesicle membrane"/>
    <property type="evidence" value="ECO:0000250"/>
    <property type="project" value="CAFA"/>
</dbReference>
<dbReference type="GO" id="GO:0008253">
    <property type="term" value="F:5'-nucleotidase activity"/>
    <property type="evidence" value="ECO:0000314"/>
    <property type="project" value="UniProtKB"/>
</dbReference>
<dbReference type="GO" id="GO:0003993">
    <property type="term" value="F:acid phosphatase activity"/>
    <property type="evidence" value="ECO:0000314"/>
    <property type="project" value="UniProtKB"/>
</dbReference>
<dbReference type="GO" id="GO:0033265">
    <property type="term" value="F:choline binding"/>
    <property type="evidence" value="ECO:0007669"/>
    <property type="project" value="Ensembl"/>
</dbReference>
<dbReference type="GO" id="GO:0042802">
    <property type="term" value="F:identical protein binding"/>
    <property type="evidence" value="ECO:0000353"/>
    <property type="project" value="IntAct"/>
</dbReference>
<dbReference type="GO" id="GO:0052642">
    <property type="term" value="F:lysophosphatidic acid phosphatase activity"/>
    <property type="evidence" value="ECO:0000314"/>
    <property type="project" value="UniProtKB"/>
</dbReference>
<dbReference type="GO" id="GO:0060090">
    <property type="term" value="F:molecular adaptor activity"/>
    <property type="evidence" value="ECO:0000269"/>
    <property type="project" value="DisProt"/>
</dbReference>
<dbReference type="GO" id="GO:0016791">
    <property type="term" value="F:phosphatase activity"/>
    <property type="evidence" value="ECO:0000315"/>
    <property type="project" value="UniProtKB"/>
</dbReference>
<dbReference type="GO" id="GO:0042803">
    <property type="term" value="F:protein homodimerization activity"/>
    <property type="evidence" value="ECO:0000314"/>
    <property type="project" value="CAFA"/>
</dbReference>
<dbReference type="GO" id="GO:0004725">
    <property type="term" value="F:protein tyrosine phosphatase activity"/>
    <property type="evidence" value="ECO:0007669"/>
    <property type="project" value="UniProtKB-EC"/>
</dbReference>
<dbReference type="GO" id="GO:0042131">
    <property type="term" value="F:thiamine phosphate phosphatase activity"/>
    <property type="evidence" value="ECO:0000250"/>
    <property type="project" value="CAFA"/>
</dbReference>
<dbReference type="GO" id="GO:0046085">
    <property type="term" value="P:adenosine metabolic process"/>
    <property type="evidence" value="ECO:0000314"/>
    <property type="project" value="UniProtKB"/>
</dbReference>
<dbReference type="GO" id="GO:0016311">
    <property type="term" value="P:dephosphorylation"/>
    <property type="evidence" value="ECO:0000315"/>
    <property type="project" value="UniProtKB"/>
</dbReference>
<dbReference type="GO" id="GO:0006629">
    <property type="term" value="P:lipid metabolic process"/>
    <property type="evidence" value="ECO:0007669"/>
    <property type="project" value="UniProtKB-KW"/>
</dbReference>
<dbReference type="GO" id="GO:0009117">
    <property type="term" value="P:nucleotide metabolic process"/>
    <property type="evidence" value="ECO:0007669"/>
    <property type="project" value="Ensembl"/>
</dbReference>
<dbReference type="GO" id="GO:0060168">
    <property type="term" value="P:positive regulation of adenosine receptor signaling pathway"/>
    <property type="evidence" value="ECO:0000315"/>
    <property type="project" value="UniProtKB"/>
</dbReference>
<dbReference type="GO" id="GO:0006144">
    <property type="term" value="P:purine nucleobase metabolic process"/>
    <property type="evidence" value="ECO:0007669"/>
    <property type="project" value="Ensembl"/>
</dbReference>
<dbReference type="GO" id="GO:0051930">
    <property type="term" value="P:regulation of sensory perception of pain"/>
    <property type="evidence" value="ECO:0000315"/>
    <property type="project" value="UniProtKB"/>
</dbReference>
<dbReference type="GO" id="GO:0006772">
    <property type="term" value="P:thiamine metabolic process"/>
    <property type="evidence" value="ECO:0000250"/>
    <property type="project" value="CAFA"/>
</dbReference>
<dbReference type="CDD" id="cd07061">
    <property type="entry name" value="HP_HAP_like"/>
    <property type="match status" value="1"/>
</dbReference>
<dbReference type="DisProt" id="DP00628"/>
<dbReference type="FunFam" id="3.40.50.1240:FF:000010">
    <property type="entry name" value="Prostatic acid phosphatase"/>
    <property type="match status" value="1"/>
</dbReference>
<dbReference type="Gene3D" id="3.40.50.1240">
    <property type="entry name" value="Phosphoglycerate mutase-like"/>
    <property type="match status" value="1"/>
</dbReference>
<dbReference type="InterPro" id="IPR033379">
    <property type="entry name" value="Acid_Pase_AS"/>
</dbReference>
<dbReference type="InterPro" id="IPR000560">
    <property type="entry name" value="His_Pase_clade-2"/>
</dbReference>
<dbReference type="InterPro" id="IPR029033">
    <property type="entry name" value="His_PPase_superfam"/>
</dbReference>
<dbReference type="InterPro" id="IPR050645">
    <property type="entry name" value="Histidine_acid_phosphatase"/>
</dbReference>
<dbReference type="PANTHER" id="PTHR11567">
    <property type="entry name" value="ACID PHOSPHATASE-RELATED"/>
    <property type="match status" value="1"/>
</dbReference>
<dbReference type="PANTHER" id="PTHR11567:SF211">
    <property type="entry name" value="PROSTATIC ACID PHOSPHATASE"/>
    <property type="match status" value="1"/>
</dbReference>
<dbReference type="Pfam" id="PF00328">
    <property type="entry name" value="His_Phos_2"/>
    <property type="match status" value="1"/>
</dbReference>
<dbReference type="SUPFAM" id="SSF53254">
    <property type="entry name" value="Phosphoglycerate mutase-like"/>
    <property type="match status" value="1"/>
</dbReference>
<dbReference type="PROSITE" id="PS00616">
    <property type="entry name" value="HIS_ACID_PHOSPHAT_1"/>
    <property type="match status" value="1"/>
</dbReference>
<dbReference type="PROSITE" id="PS00778">
    <property type="entry name" value="HIS_ACID_PHOSPHAT_2"/>
    <property type="match status" value="1"/>
</dbReference>
<keyword id="KW-0002">3D-structure</keyword>
<keyword id="KW-0025">Alternative splicing</keyword>
<keyword id="KW-0034">Amyloid</keyword>
<keyword id="KW-1003">Cell membrane</keyword>
<keyword id="KW-0963">Cytoplasm</keyword>
<keyword id="KW-0903">Direct protein sequencing</keyword>
<keyword id="KW-1015">Disulfide bond</keyword>
<keyword id="KW-0325">Glycoprotein</keyword>
<keyword id="KW-0378">Hydrolase</keyword>
<keyword id="KW-0443">Lipid metabolism</keyword>
<keyword id="KW-0458">Lysosome</keyword>
<keyword id="KW-0472">Membrane</keyword>
<keyword id="KW-0539">Nucleus</keyword>
<keyword id="KW-1267">Proteomics identification</keyword>
<keyword id="KW-1185">Reference proteome</keyword>
<keyword id="KW-0964">Secreted</keyword>
<keyword id="KW-0732">Signal</keyword>
<reference key="1">
    <citation type="journal article" date="1992" name="Biochem. Biophys. Res. Commun.">
        <title>Structure of human prostatic acid phosphatase gene.</title>
        <authorList>
            <person name="Sharief F.S."/>
            <person name="Li S.S.-L."/>
        </authorList>
    </citation>
    <scope>NUCLEOTIDE SEQUENCE [GENOMIC DNA] (ISOFORM 1)</scope>
</reference>
<reference key="2">
    <citation type="journal article" date="1991" name="J. Biol. Chem.">
        <title>Covalent structure, disulfide bonding, and identification of reactive surface and active site residues of human prostatic acid phosphatase.</title>
        <authorList>
            <person name="van Etten R.L."/>
            <person name="Davidson R."/>
            <person name="Stevis P.E."/>
            <person name="Macarthur H."/>
            <person name="Moore D.L."/>
        </authorList>
    </citation>
    <scope>NUCLEOTIDE SEQUENCE [MRNA] (ISOFORM 1)</scope>
    <scope>PARTIAL PROTEIN SEQUENCE</scope>
    <scope>DISULFIDE BONDS</scope>
    <scope>ACTIVE SITE</scope>
</reference>
<reference key="3">
    <citation type="journal article" date="1989" name="Biochem. Biophys. Res. Commun.">
        <title>Human prostatic acid phosphatase: cDNA cloning, gene mapping and protein sequence homology with lysosomal acid phosphatase.</title>
        <authorList>
            <person name="Sharief F.S."/>
            <person name="Lee H."/>
            <person name="Leuderman M.M."/>
            <person name="Lundwall A."/>
            <person name="Deaven L.L."/>
            <person name="Lee C.-L."/>
            <person name="Li S.S.-L."/>
        </authorList>
    </citation>
    <scope>NUCLEOTIDE SEQUENCE [MRNA] (ISOFORM 1)</scope>
</reference>
<reference key="4">
    <citation type="journal article" date="1988" name="FEBS Lett.">
        <title>Molecular cloning and sequence analysis of cDNA encoding human prostatic acid phosphatase.</title>
        <authorList>
            <person name="Vihko P."/>
            <person name="Virkkunen P."/>
            <person name="Henttu P."/>
            <person name="Roiko K."/>
            <person name="Solin T."/>
            <person name="Huhtala M.L."/>
        </authorList>
    </citation>
    <scope>NUCLEOTIDE SEQUENCE [MRNA] (ISOFORM 1)</scope>
    <scope>PARTIAL PROTEIN SEQUENCE</scope>
    <source>
        <tissue>Prostate</tissue>
    </source>
</reference>
<reference key="5">
    <citation type="journal article" date="1990" name="Nucleic Acids Res.">
        <title>Nucleotide sequence of human prostatic acid phosphatase determined from a full-length cDNA clone.</title>
        <authorList>
            <person name="Tailor P.G."/>
            <person name="Govindan M.V."/>
            <person name="Patel P.C."/>
        </authorList>
    </citation>
    <scope>NUCLEOTIDE SEQUENCE [MRNA] (ISOFORM 1)</scope>
    <source>
        <tissue>Prostate</tissue>
    </source>
</reference>
<reference key="6">
    <citation type="journal article" date="1994" name="Biochem. Mol. Biol. Int.">
        <title>Nucleotide sequence of human prostatic acid phosphatase ACPP gene, including seven Alu repeats.</title>
        <authorList>
            <person name="Sharief F.S."/>
            <person name="Li S.S.-L."/>
        </authorList>
    </citation>
    <scope>NUCLEOTIDE SEQUENCE [GENOMIC DNA] (ISOFORM 1)</scope>
</reference>
<reference key="7">
    <citation type="submission" date="2003-02" db="EMBL/GenBank/DDBJ databases">
        <title>Acid phosphatase prostate mRNA,nirs splice variant1.</title>
        <authorList>
            <person name="Sameshima E."/>
            <person name="Tabata Y."/>
            <person name="Hayashi A."/>
            <person name="Iida K."/>
            <person name="Mitsuyama M."/>
            <person name="Kanai S."/>
            <person name="Furuya T."/>
            <person name="Saito T."/>
        </authorList>
    </citation>
    <scope>NUCLEOTIDE SEQUENCE [MRNA] (ISOFORM 3)</scope>
</reference>
<reference key="8">
    <citation type="journal article" date="2004" name="Nat. Genet.">
        <title>Complete sequencing and characterization of 21,243 full-length human cDNAs.</title>
        <authorList>
            <person name="Ota T."/>
            <person name="Suzuki Y."/>
            <person name="Nishikawa T."/>
            <person name="Otsuki T."/>
            <person name="Sugiyama T."/>
            <person name="Irie R."/>
            <person name="Wakamatsu A."/>
            <person name="Hayashi K."/>
            <person name="Sato H."/>
            <person name="Nagai K."/>
            <person name="Kimura K."/>
            <person name="Makita H."/>
            <person name="Sekine M."/>
            <person name="Obayashi M."/>
            <person name="Nishi T."/>
            <person name="Shibahara T."/>
            <person name="Tanaka T."/>
            <person name="Ishii S."/>
            <person name="Yamamoto J."/>
            <person name="Saito K."/>
            <person name="Kawai Y."/>
            <person name="Isono Y."/>
            <person name="Nakamura Y."/>
            <person name="Nagahari K."/>
            <person name="Murakami K."/>
            <person name="Yasuda T."/>
            <person name="Iwayanagi T."/>
            <person name="Wagatsuma M."/>
            <person name="Shiratori A."/>
            <person name="Sudo H."/>
            <person name="Hosoiri T."/>
            <person name="Kaku Y."/>
            <person name="Kodaira H."/>
            <person name="Kondo H."/>
            <person name="Sugawara M."/>
            <person name="Takahashi M."/>
            <person name="Kanda K."/>
            <person name="Yokoi T."/>
            <person name="Furuya T."/>
            <person name="Kikkawa E."/>
            <person name="Omura Y."/>
            <person name="Abe K."/>
            <person name="Kamihara K."/>
            <person name="Katsuta N."/>
            <person name="Sato K."/>
            <person name="Tanikawa M."/>
            <person name="Yamazaki M."/>
            <person name="Ninomiya K."/>
            <person name="Ishibashi T."/>
            <person name="Yamashita H."/>
            <person name="Murakawa K."/>
            <person name="Fujimori K."/>
            <person name="Tanai H."/>
            <person name="Kimata M."/>
            <person name="Watanabe M."/>
            <person name="Hiraoka S."/>
            <person name="Chiba Y."/>
            <person name="Ishida S."/>
            <person name="Ono Y."/>
            <person name="Takiguchi S."/>
            <person name="Watanabe S."/>
            <person name="Yosida M."/>
            <person name="Hotuta T."/>
            <person name="Kusano J."/>
            <person name="Kanehori K."/>
            <person name="Takahashi-Fujii A."/>
            <person name="Hara H."/>
            <person name="Tanase T.-O."/>
            <person name="Nomura Y."/>
            <person name="Togiya S."/>
            <person name="Komai F."/>
            <person name="Hara R."/>
            <person name="Takeuchi K."/>
            <person name="Arita M."/>
            <person name="Imose N."/>
            <person name="Musashino K."/>
            <person name="Yuuki H."/>
            <person name="Oshima A."/>
            <person name="Sasaki N."/>
            <person name="Aotsuka S."/>
            <person name="Yoshikawa Y."/>
            <person name="Matsunawa H."/>
            <person name="Ichihara T."/>
            <person name="Shiohata N."/>
            <person name="Sano S."/>
            <person name="Moriya S."/>
            <person name="Momiyama H."/>
            <person name="Satoh N."/>
            <person name="Takami S."/>
            <person name="Terashima Y."/>
            <person name="Suzuki O."/>
            <person name="Nakagawa S."/>
            <person name="Senoh A."/>
            <person name="Mizoguchi H."/>
            <person name="Goto Y."/>
            <person name="Shimizu F."/>
            <person name="Wakebe H."/>
            <person name="Hishigaki H."/>
            <person name="Watanabe T."/>
            <person name="Sugiyama A."/>
            <person name="Takemoto M."/>
            <person name="Kawakami B."/>
            <person name="Yamazaki M."/>
            <person name="Watanabe K."/>
            <person name="Kumagai A."/>
            <person name="Itakura S."/>
            <person name="Fukuzumi Y."/>
            <person name="Fujimori Y."/>
            <person name="Komiyama M."/>
            <person name="Tashiro H."/>
            <person name="Tanigami A."/>
            <person name="Fujiwara T."/>
            <person name="Ono T."/>
            <person name="Yamada K."/>
            <person name="Fujii Y."/>
            <person name="Ozaki K."/>
            <person name="Hirao M."/>
            <person name="Ohmori Y."/>
            <person name="Kawabata A."/>
            <person name="Hikiji T."/>
            <person name="Kobatake N."/>
            <person name="Inagaki H."/>
            <person name="Ikema Y."/>
            <person name="Okamoto S."/>
            <person name="Okitani R."/>
            <person name="Kawakami T."/>
            <person name="Noguchi S."/>
            <person name="Itoh T."/>
            <person name="Shigeta K."/>
            <person name="Senba T."/>
            <person name="Matsumura K."/>
            <person name="Nakajima Y."/>
            <person name="Mizuno T."/>
            <person name="Morinaga M."/>
            <person name="Sasaki M."/>
            <person name="Togashi T."/>
            <person name="Oyama M."/>
            <person name="Hata H."/>
            <person name="Watanabe M."/>
            <person name="Komatsu T."/>
            <person name="Mizushima-Sugano J."/>
            <person name="Satoh T."/>
            <person name="Shirai Y."/>
            <person name="Takahashi Y."/>
            <person name="Nakagawa K."/>
            <person name="Okumura K."/>
            <person name="Nagase T."/>
            <person name="Nomura N."/>
            <person name="Kikuchi H."/>
            <person name="Masuho Y."/>
            <person name="Yamashita R."/>
            <person name="Nakai K."/>
            <person name="Yada T."/>
            <person name="Nakamura Y."/>
            <person name="Ohara O."/>
            <person name="Isogai T."/>
            <person name="Sugano S."/>
        </authorList>
    </citation>
    <scope>NUCLEOTIDE SEQUENCE [LARGE SCALE MRNA] (ISOFORM 3)</scope>
    <source>
        <tissue>Prostate</tissue>
    </source>
</reference>
<reference key="9">
    <citation type="journal article" date="2006" name="Nature">
        <title>The DNA sequence, annotation and analysis of human chromosome 3.</title>
        <authorList>
            <person name="Muzny D.M."/>
            <person name="Scherer S.E."/>
            <person name="Kaul R."/>
            <person name="Wang J."/>
            <person name="Yu J."/>
            <person name="Sudbrak R."/>
            <person name="Buhay C.J."/>
            <person name="Chen R."/>
            <person name="Cree A."/>
            <person name="Ding Y."/>
            <person name="Dugan-Rocha S."/>
            <person name="Gill R."/>
            <person name="Gunaratne P."/>
            <person name="Harris R.A."/>
            <person name="Hawes A.C."/>
            <person name="Hernandez J."/>
            <person name="Hodgson A.V."/>
            <person name="Hume J."/>
            <person name="Jackson A."/>
            <person name="Khan Z.M."/>
            <person name="Kovar-Smith C."/>
            <person name="Lewis L.R."/>
            <person name="Lozado R.J."/>
            <person name="Metzker M.L."/>
            <person name="Milosavljevic A."/>
            <person name="Miner G.R."/>
            <person name="Morgan M.B."/>
            <person name="Nazareth L.V."/>
            <person name="Scott G."/>
            <person name="Sodergren E."/>
            <person name="Song X.-Z."/>
            <person name="Steffen D."/>
            <person name="Wei S."/>
            <person name="Wheeler D.A."/>
            <person name="Wright M.W."/>
            <person name="Worley K.C."/>
            <person name="Yuan Y."/>
            <person name="Zhang Z."/>
            <person name="Adams C.Q."/>
            <person name="Ansari-Lari M.A."/>
            <person name="Ayele M."/>
            <person name="Brown M.J."/>
            <person name="Chen G."/>
            <person name="Chen Z."/>
            <person name="Clendenning J."/>
            <person name="Clerc-Blankenburg K.P."/>
            <person name="Chen R."/>
            <person name="Chen Z."/>
            <person name="Davis C."/>
            <person name="Delgado O."/>
            <person name="Dinh H.H."/>
            <person name="Dong W."/>
            <person name="Draper H."/>
            <person name="Ernst S."/>
            <person name="Fu G."/>
            <person name="Gonzalez-Garay M.L."/>
            <person name="Garcia D.K."/>
            <person name="Gillett W."/>
            <person name="Gu J."/>
            <person name="Hao B."/>
            <person name="Haugen E."/>
            <person name="Havlak P."/>
            <person name="He X."/>
            <person name="Hennig S."/>
            <person name="Hu S."/>
            <person name="Huang W."/>
            <person name="Jackson L.R."/>
            <person name="Jacob L.S."/>
            <person name="Kelly S.H."/>
            <person name="Kube M."/>
            <person name="Levy R."/>
            <person name="Li Z."/>
            <person name="Liu B."/>
            <person name="Liu J."/>
            <person name="Liu W."/>
            <person name="Lu J."/>
            <person name="Maheshwari M."/>
            <person name="Nguyen B.-V."/>
            <person name="Okwuonu G.O."/>
            <person name="Palmeiri A."/>
            <person name="Pasternak S."/>
            <person name="Perez L.M."/>
            <person name="Phelps K.A."/>
            <person name="Plopper F.J."/>
            <person name="Qiang B."/>
            <person name="Raymond C."/>
            <person name="Rodriguez R."/>
            <person name="Saenphimmachak C."/>
            <person name="Santibanez J."/>
            <person name="Shen H."/>
            <person name="Shen Y."/>
            <person name="Subramanian S."/>
            <person name="Tabor P.E."/>
            <person name="Verduzco D."/>
            <person name="Waldron L."/>
            <person name="Wang J."/>
            <person name="Wang J."/>
            <person name="Wang Q."/>
            <person name="Williams G.A."/>
            <person name="Wong G.K.-S."/>
            <person name="Yao Z."/>
            <person name="Zhang J."/>
            <person name="Zhang X."/>
            <person name="Zhao G."/>
            <person name="Zhou J."/>
            <person name="Zhou Y."/>
            <person name="Nelson D."/>
            <person name="Lehrach H."/>
            <person name="Reinhardt R."/>
            <person name="Naylor S.L."/>
            <person name="Yang H."/>
            <person name="Olson M."/>
            <person name="Weinstock G."/>
            <person name="Gibbs R.A."/>
        </authorList>
    </citation>
    <scope>NUCLEOTIDE SEQUENCE [LARGE SCALE GENOMIC DNA]</scope>
</reference>
<reference key="10">
    <citation type="submission" date="2005-09" db="EMBL/GenBank/DDBJ databases">
        <authorList>
            <person name="Mural R.J."/>
            <person name="Istrail S."/>
            <person name="Sutton G.G."/>
            <person name="Florea L."/>
            <person name="Halpern A.L."/>
            <person name="Mobarry C.M."/>
            <person name="Lippert R."/>
            <person name="Walenz B."/>
            <person name="Shatkay H."/>
            <person name="Dew I."/>
            <person name="Miller J.R."/>
            <person name="Flanigan M.J."/>
            <person name="Edwards N.J."/>
            <person name="Bolanos R."/>
            <person name="Fasulo D."/>
            <person name="Halldorsson B.V."/>
            <person name="Hannenhalli S."/>
            <person name="Turner R."/>
            <person name="Yooseph S."/>
            <person name="Lu F."/>
            <person name="Nusskern D.R."/>
            <person name="Shue B.C."/>
            <person name="Zheng X.H."/>
            <person name="Zhong F."/>
            <person name="Delcher A.L."/>
            <person name="Huson D.H."/>
            <person name="Kravitz S.A."/>
            <person name="Mouchard L."/>
            <person name="Reinert K."/>
            <person name="Remington K.A."/>
            <person name="Clark A.G."/>
            <person name="Waterman M.S."/>
            <person name="Eichler E.E."/>
            <person name="Adams M.D."/>
            <person name="Hunkapiller M.W."/>
            <person name="Myers E.W."/>
            <person name="Venter J.C."/>
        </authorList>
    </citation>
    <scope>NUCLEOTIDE SEQUENCE [LARGE SCALE GENOMIC DNA]</scope>
</reference>
<reference key="11">
    <citation type="journal article" date="2004" name="Genome Res.">
        <title>The status, quality, and expansion of the NIH full-length cDNA project: the Mammalian Gene Collection (MGC).</title>
        <authorList>
            <consortium name="The MGC Project Team"/>
        </authorList>
    </citation>
    <scope>NUCLEOTIDE SEQUENCE [LARGE SCALE MRNA] (ISOFORMS 1 AND 2)</scope>
    <scope>VARIANTS ASN-15; VAL-124; ARG-226; HIS-330 AND ALA-360</scope>
    <source>
        <tissue>Prostate</tissue>
    </source>
</reference>
<reference key="12">
    <citation type="journal article" date="1987" name="Arch. Biochem. Biophys.">
        <title>Structures of the carbohydrate moieties of human prostatic acid phosphatase elucidated by H1 nuclear magnetic resonance spectroscopy.</title>
        <authorList>
            <person name="Risley J.M."/>
            <person name="Van Etten R.L."/>
        </authorList>
    </citation>
    <scope>STRUCTURE OF CARBOHYDRATES</scope>
</reference>
<reference key="13">
    <citation type="journal article" date="1997" name="Acta Biochim. Pol.">
        <title>Covalent modification and site-directed mutagenesis of an active site tryptophan of human prostatic acid phosphatase.</title>
        <authorList>
            <person name="Zhang Z."/>
            <person name="Ostanin K."/>
            <person name="Van Etten R.L."/>
        </authorList>
    </citation>
    <scope>IDENTIFICATION BY MASS SPECTROMETRY</scope>
    <scope>FUNCTION</scope>
    <scope>CATALYTIC ACTIVITY</scope>
    <scope>ACTIVITY REGULATION</scope>
    <scope>MUTAGENESIS OF TRP-206</scope>
</reference>
<reference key="14">
    <citation type="journal article" date="1999" name="J. Biol. Chem.">
        <title>Isolation of a cDNA encoding human lysophosphatidic acid phosphatase that is involved in the regulation of mitochondrial lipid biosynthesis.</title>
        <authorList>
            <person name="Hiroyama M."/>
            <person name="Takenawa T."/>
        </authorList>
    </citation>
    <scope>FUNCTION</scope>
    <scope>CATALYTIC ACTIVITY</scope>
    <scope>SUBSTRATE SPECIFICITY</scope>
    <source>
        <tissue>Brain</tissue>
    </source>
</reference>
<reference key="15">
    <citation type="journal article" date="2004" name="FEBS Lett.">
        <title>Prostatic acid phosphatase degrades lysophosphatidic acid in seminal plasma.</title>
        <authorList>
            <person name="Tanaka M."/>
            <person name="Kishi Y."/>
            <person name="Takanezawa Y."/>
            <person name="Kakehi Y."/>
            <person name="Aoki J."/>
            <person name="Arai H."/>
        </authorList>
    </citation>
    <scope>FUNCTION</scope>
    <scope>CATALYTIC ACTIVITY</scope>
</reference>
<reference key="16">
    <citation type="journal article" date="2007" name="Cancer Res.">
        <title>Prostatic acid phosphatase is not a prostate specific target.</title>
        <authorList>
            <person name="Quintero I.B."/>
            <person name="Araujo C.L."/>
            <person name="Pulkka A.E."/>
            <person name="Wirkkala R.S."/>
            <person name="Herrala A.M."/>
            <person name="Eskelinen E.-L."/>
            <person name="Jokitalo E."/>
            <person name="Hellstroem P.A."/>
            <person name="Tuominen H.J."/>
            <person name="Hirvikoski P.P."/>
            <person name="Vihko P.T."/>
        </authorList>
    </citation>
    <scope>ALTERNATIVE SPLICING</scope>
    <scope>SUBCELLULAR LOCATION</scope>
    <scope>TISSUE SPECIFICITY</scope>
</reference>
<reference key="17">
    <citation type="journal article" date="2007" name="Cell">
        <title>Semen-derived amyloid fibrils drastically enhance HIV infection.</title>
        <authorList>
            <person name="Munch J."/>
            <person name="Rucker E."/>
            <person name="Standker L."/>
            <person name="Adermann K."/>
            <person name="Goffinet C."/>
            <person name="Schindler M."/>
            <person name="Wildum S."/>
            <person name="Chinnadurai R."/>
            <person name="Rajan D."/>
            <person name="Specht A."/>
            <person name="Gimenez-Gallego G."/>
            <person name="Sanchez P.C."/>
            <person name="Fowler D.M."/>
            <person name="Koulov A."/>
            <person name="Kelly J.W."/>
            <person name="Mothes W."/>
            <person name="Grivel J.C."/>
            <person name="Margolis L."/>
            <person name="Keppler O.T."/>
            <person name="Forssmann W.G."/>
            <person name="Kirchhoff F."/>
        </authorList>
    </citation>
    <scope>PROTEOLYTIC PROCESSING</scope>
    <scope>IDENTIFICATION BY MASS SPECTROMETRY OF PAPF39</scope>
    <scope>FUNCTION IN HIV INFECTION (MICROBIAL INFECTION)</scope>
</reference>
<reference key="18">
    <citation type="journal article" date="2007" name="Traffic">
        <title>Integral and associated lysosomal membrane proteins.</title>
        <authorList>
            <person name="Schroeder B."/>
            <person name="Wrocklage C."/>
            <person name="Pan C."/>
            <person name="Jaeger R."/>
            <person name="Koesters B."/>
            <person name="Schaefer H."/>
            <person name="Elsaesser H.-P."/>
            <person name="Mann M."/>
            <person name="Hasilik A."/>
        </authorList>
    </citation>
    <scope>SUBCELLULAR LOCATION [LARGE SCALE ANALYSIS]</scope>
    <source>
        <tissue>Placenta</tissue>
    </source>
</reference>
<reference key="19">
    <citation type="journal article" date="2009" name="J. Virol.">
        <title>Fibrils of prostatic acid phosphatase fragments boost infections with XMRV (xenotropic murine leukemia virus-related virus), a human retrovirus associated with prostate cancer.</title>
        <authorList>
            <person name="Hong S."/>
            <person name="Klein E.A."/>
            <person name="Das Gupta J."/>
            <person name="Hanke K."/>
            <person name="Weight C.J."/>
            <person name="Nguyen C."/>
            <person name="Gaughan C."/>
            <person name="Kim K.A."/>
            <person name="Bannert N."/>
            <person name="Kirchhoff F."/>
            <person name="Munch J."/>
            <person name="Silverman R.H."/>
        </authorList>
    </citation>
    <scope>PROTEOLYTIC PROCESSING</scope>
    <scope>FUNCTION IN XMRV INFECTION (MICROBIAL INFECTION)</scope>
</reference>
<reference key="20">
    <citation type="journal article" date="2009" name="Proc. Natl. Acad. Sci. U.S.A.">
        <title>The main green tea polyphenol epigallocatechin-3-gallate counteracts semen-mediated enhancement of HIV infection.</title>
        <authorList>
            <person name="Hauber I."/>
            <person name="Hohenberg H."/>
            <person name="Holstermann B."/>
            <person name="Hunstein W."/>
            <person name="Hauber J."/>
        </authorList>
    </citation>
    <scope>FUNCTION</scope>
    <scope>DEGRADATION OF SEVI AMYLOID FIBRILS (MICROBIAL INFECTION)</scope>
</reference>
<reference key="21">
    <citation type="journal article" date="2010" name="J. Biol. Chem.">
        <title>Aminoquinoline surfen inhibits the action of SEVI (semen-derived enhancer of viral infection).</title>
        <authorList>
            <person name="Roan N.R."/>
            <person name="Sowinski S."/>
            <person name="Munch J."/>
            <person name="Kirchhoff F."/>
            <person name="Greene W.C."/>
        </authorList>
    </citation>
    <scope>FUNCTION (MICROBIAL INFECTION)</scope>
    <scope>INHIBITION OF SEVI ACTIVITY</scope>
</reference>
<reference key="22">
    <citation type="journal article" date="2010" name="J. Biol. Chem.">
        <title>Human prostatic acid phosphatase, an authentic tyrosine phosphatase, dephosphorylates ErbB-2 and regulates prostate cancer cell growth.</title>
        <authorList>
            <person name="Chuang T.D."/>
            <person name="Chen S.J."/>
            <person name="Lin F.F."/>
            <person name="Veeramani S."/>
            <person name="Kumar S."/>
            <person name="Batra S.K."/>
            <person name="Tu Y."/>
            <person name="Lin M.F."/>
        </authorList>
    </citation>
    <scope>FUNCTION (ISOFORM 2)</scope>
    <scope>CATALYTIC ACTIVITY (ISOFORM 2)</scope>
    <scope>SUBCELLULAR LOCATION (ISOFORM 2)</scope>
</reference>
<reference key="23">
    <citation type="journal article" date="2011" name="Int. J. Clin. Exp. Pathol.">
        <title>Prostatic acid phosphatase expression in human tissues.</title>
        <authorList>
            <person name="Graddis T.J."/>
            <person name="McMahan C.J."/>
            <person name="Tamman J."/>
            <person name="Page K.J."/>
            <person name="Trager J.B."/>
        </authorList>
    </citation>
    <scope>TISSUE SPECIFICITY</scope>
</reference>
<reference key="24">
    <citation type="journal article" date="1998" name="J. Biol. Chem.">
        <title>Structural origins of L(+)-tartrate inhibition of human prostatic acid phosphatase.</title>
        <authorList>
            <person name="Lacount M.W."/>
            <person name="Handy G."/>
            <person name="Lebioda L."/>
        </authorList>
    </citation>
    <scope>X-RAY CRYSTALLOGRAPHY (2.9 ANGSTROMS) IN COMPLEX WITH N-PROPYL-L-TARTRAMATE</scope>
</reference>
<reference key="25">
    <citation type="journal article" date="2000" name="Prostate">
        <title>Crystal structure of human prostatic acid phosphatase.</title>
        <authorList>
            <person name="Jakob C.G."/>
            <person name="Lewinski K."/>
            <person name="Kuciel R."/>
            <person name="Ostrowski W."/>
            <person name="Lebioda L."/>
        </authorList>
    </citation>
    <scope>X-RAY CRYSTALLOGRAPHY (3.2 ANGSTROMS) OF 33-374</scope>
    <scope>DISULFIDE BONDS</scope>
    <scope>GLYCOSYLATION AT ASN-94 AND ASN-220</scope>
</reference>
<reference evidence="31 32" key="26">
    <citation type="journal article" date="2003" name="Biochemistry">
        <title>Crystal structures of human prostatic acid phosphatase in complex with a phosphate ion and alpha-benzylaminobenzylphosphonic acid update the mechanistic picture and offer new insights into inhibitor design.</title>
        <authorList>
            <person name="Ortlund E."/>
            <person name="LaCount M.W."/>
            <person name="Lebioda L."/>
        </authorList>
    </citation>
    <scope>X-RAY CRYSTALLOGRAPHY (2.9 ANGSTROMS) OF 33-386 IN COMPLEX WITH A PHOSPHATE ION AND INHIBITOR ALPHA-BENZYLAMINOBENZYLPHOSPHONIC ACID</scope>
    <scope>DISULFIDE BONDS</scope>
    <scope>GLYCOSYLATION AT ASN-220 AND ASN-333</scope>
</reference>
<reference key="27">
    <citation type="journal article" date="2009" name="J. Am. Chem. Soc.">
        <title>NMR structure in a membrane environment reveals putative amyloidogenic regions of the SEVI precursor peptide PAP(248-286).</title>
        <authorList>
            <person name="Nanga R.P."/>
            <person name="Brender J.R."/>
            <person name="Vivekanandan S."/>
            <person name="Popovych N."/>
            <person name="Ramamoorthy A."/>
        </authorList>
    </citation>
    <scope>STRUCTURE BY NMR OF 248-286</scope>
</reference>
<sequence>MRAAPLLLARAASLSLGFLFLLFFWLDRSVLAKELKFVTLVFRHGDRSPIDTFPTDPIKESSWPQGFGQLTQLGMEQHYELGEYIRKRYRKFLNESYKHEQVYIRSTDVDRTLMSAMTNLAALFPPEGVSIWNPILLWQPIPVHTVPLSEDQLLYLPFRNCPRFQELESETLKSEEFQKRLHPYKDFIATLGKLSGLHGQDLFGIWSKVYDPLYCESVHNFTLPSWATEDTMTKLRELSELSLLSLYGIHKQKEKSRLQGGVLVNEILNHMKRATQIPSYKKLIMYSAHDTTVSGLQMALDVYNGLLPPYASCHLTELYFEKGEYFVEMYYRNETQHEPYPLMLPGCSPSCPLERFAELVGPVIPQDWSTECMTTNSHQGTEDSTD</sequence>